<accession>B2I359</accession>
<name>LEUC_ACIBC</name>
<keyword id="KW-0004">4Fe-4S</keyword>
<keyword id="KW-0028">Amino-acid biosynthesis</keyword>
<keyword id="KW-0100">Branched-chain amino acid biosynthesis</keyword>
<keyword id="KW-0408">Iron</keyword>
<keyword id="KW-0411">Iron-sulfur</keyword>
<keyword id="KW-0432">Leucine biosynthesis</keyword>
<keyword id="KW-0456">Lyase</keyword>
<keyword id="KW-0479">Metal-binding</keyword>
<gene>
    <name evidence="1" type="primary">leuC</name>
    <name type="ordered locus">ACICU_00425</name>
</gene>
<protein>
    <recommendedName>
        <fullName evidence="1">3-isopropylmalate dehydratase large subunit</fullName>
        <ecNumber evidence="1">4.2.1.33</ecNumber>
    </recommendedName>
    <alternativeName>
        <fullName evidence="1">Alpha-IPM isomerase</fullName>
        <shortName evidence="1">IPMI</shortName>
    </alternativeName>
    <alternativeName>
        <fullName evidence="1">Isopropylmalate isomerase</fullName>
    </alternativeName>
</protein>
<reference key="1">
    <citation type="journal article" date="2008" name="Antimicrob. Agents Chemother.">
        <title>Whole-genome pyrosequencing of an epidemic multidrug-resistant Acinetobacter baumannii strain belonging to the European clone II group.</title>
        <authorList>
            <person name="Iacono M."/>
            <person name="Villa L."/>
            <person name="Fortini D."/>
            <person name="Bordoni R."/>
            <person name="Imperi F."/>
            <person name="Bonnal R.J."/>
            <person name="Sicheritz-Ponten T."/>
            <person name="De Bellis G."/>
            <person name="Visca P."/>
            <person name="Cassone A."/>
            <person name="Carattoli A."/>
        </authorList>
    </citation>
    <scope>NUCLEOTIDE SEQUENCE [LARGE SCALE GENOMIC DNA]</scope>
    <source>
        <strain>ACICU</strain>
    </source>
</reference>
<sequence>MAGKTLYDKLWDDHVVTQRDDGSCLLYIDRHLLHEVTSPQAFEGLQLAGRQPWRLSANVATPDHNVPTSKKERDQGIAGIEDDTSRIQVQTLDDNCKAFNIVEFGINDIRQGIVHVVGPEQGLTLPGMTVVCGDSHTATHGAFGCLAHGIGTSEVEHVLATQCLVQKKSKNMLVRVDGVLGKGVTPKDVVLAIIGKIGTAGGTGYAIEFGGQVFRDMSIEGRMTVCNMAIEAGARVGMVAVDDKTIEYVKGRSYAPKGEQWEQAVAYWNTLHSDVDAVFDAVVELNGAEIEPQVSWGTSPEMVIPVSKAVPTLEQAKDDVQRNDWTRAYQYMGLNAGQALADIQLDRVFIGSCTNSRIEDIRAAAEVVKGRKVAPSIKQAMIVPGSGLVKQQAEKEGLDKIFLEAGFEWREPGCSMCLAMNADKLQPGEHCASTSNRNFEGRQGNGGRTHLVSPAMAAAAAIAGHFVDVRSF</sequence>
<organism>
    <name type="scientific">Acinetobacter baumannii (strain ACICU)</name>
    <dbReference type="NCBI Taxonomy" id="405416"/>
    <lineage>
        <taxon>Bacteria</taxon>
        <taxon>Pseudomonadati</taxon>
        <taxon>Pseudomonadota</taxon>
        <taxon>Gammaproteobacteria</taxon>
        <taxon>Moraxellales</taxon>
        <taxon>Moraxellaceae</taxon>
        <taxon>Acinetobacter</taxon>
        <taxon>Acinetobacter calcoaceticus/baumannii complex</taxon>
    </lineage>
</organism>
<evidence type="ECO:0000255" key="1">
    <source>
        <dbReference type="HAMAP-Rule" id="MF_01026"/>
    </source>
</evidence>
<feature type="chain" id="PRO_1000135656" description="3-isopropylmalate dehydratase large subunit">
    <location>
        <begin position="1"/>
        <end position="472"/>
    </location>
</feature>
<feature type="binding site" evidence="1">
    <location>
        <position position="353"/>
    </location>
    <ligand>
        <name>[4Fe-4S] cluster</name>
        <dbReference type="ChEBI" id="CHEBI:49883"/>
    </ligand>
</feature>
<feature type="binding site" evidence="1">
    <location>
        <position position="414"/>
    </location>
    <ligand>
        <name>[4Fe-4S] cluster</name>
        <dbReference type="ChEBI" id="CHEBI:49883"/>
    </ligand>
</feature>
<feature type="binding site" evidence="1">
    <location>
        <position position="417"/>
    </location>
    <ligand>
        <name>[4Fe-4S] cluster</name>
        <dbReference type="ChEBI" id="CHEBI:49883"/>
    </ligand>
</feature>
<proteinExistence type="inferred from homology"/>
<dbReference type="EC" id="4.2.1.33" evidence="1"/>
<dbReference type="EMBL" id="CP000863">
    <property type="protein sequence ID" value="ACC55737.1"/>
    <property type="molecule type" value="Genomic_DNA"/>
</dbReference>
<dbReference type="RefSeq" id="WP_000907606.1">
    <property type="nucleotide sequence ID" value="NZ_CP031380.1"/>
</dbReference>
<dbReference type="SMR" id="B2I359"/>
<dbReference type="KEGG" id="abc:ACICU_00425"/>
<dbReference type="HOGENOM" id="CLU_006714_3_4_6"/>
<dbReference type="UniPathway" id="UPA00048">
    <property type="reaction ID" value="UER00071"/>
</dbReference>
<dbReference type="Proteomes" id="UP000008839">
    <property type="component" value="Chromosome"/>
</dbReference>
<dbReference type="GO" id="GO:0003861">
    <property type="term" value="F:3-isopropylmalate dehydratase activity"/>
    <property type="evidence" value="ECO:0007669"/>
    <property type="project" value="UniProtKB-UniRule"/>
</dbReference>
<dbReference type="GO" id="GO:0051539">
    <property type="term" value="F:4 iron, 4 sulfur cluster binding"/>
    <property type="evidence" value="ECO:0007669"/>
    <property type="project" value="UniProtKB-KW"/>
</dbReference>
<dbReference type="GO" id="GO:0046872">
    <property type="term" value="F:metal ion binding"/>
    <property type="evidence" value="ECO:0007669"/>
    <property type="project" value="UniProtKB-KW"/>
</dbReference>
<dbReference type="GO" id="GO:0009098">
    <property type="term" value="P:L-leucine biosynthetic process"/>
    <property type="evidence" value="ECO:0007669"/>
    <property type="project" value="UniProtKB-UniRule"/>
</dbReference>
<dbReference type="CDD" id="cd01583">
    <property type="entry name" value="IPMI"/>
    <property type="match status" value="1"/>
</dbReference>
<dbReference type="FunFam" id="3.30.499.10:FF:000007">
    <property type="entry name" value="3-isopropylmalate dehydratase large subunit"/>
    <property type="match status" value="1"/>
</dbReference>
<dbReference type="Gene3D" id="3.30.499.10">
    <property type="entry name" value="Aconitase, domain 3"/>
    <property type="match status" value="2"/>
</dbReference>
<dbReference type="HAMAP" id="MF_01026">
    <property type="entry name" value="LeuC_type1"/>
    <property type="match status" value="1"/>
</dbReference>
<dbReference type="InterPro" id="IPR004430">
    <property type="entry name" value="3-IsopropMal_deHydase_lsu"/>
</dbReference>
<dbReference type="InterPro" id="IPR015931">
    <property type="entry name" value="Acnase/IPM_dHydase_lsu_aba_1/3"/>
</dbReference>
<dbReference type="InterPro" id="IPR001030">
    <property type="entry name" value="Acoase/IPM_deHydtase_lsu_aba"/>
</dbReference>
<dbReference type="InterPro" id="IPR018136">
    <property type="entry name" value="Aconitase_4Fe-4S_BS"/>
</dbReference>
<dbReference type="InterPro" id="IPR036008">
    <property type="entry name" value="Aconitase_4Fe-4S_dom"/>
</dbReference>
<dbReference type="InterPro" id="IPR050067">
    <property type="entry name" value="IPM_dehydratase_rel_enz"/>
</dbReference>
<dbReference type="InterPro" id="IPR033941">
    <property type="entry name" value="IPMI_cat"/>
</dbReference>
<dbReference type="NCBIfam" id="TIGR00170">
    <property type="entry name" value="leuC"/>
    <property type="match status" value="1"/>
</dbReference>
<dbReference type="NCBIfam" id="NF004016">
    <property type="entry name" value="PRK05478.1"/>
    <property type="match status" value="1"/>
</dbReference>
<dbReference type="NCBIfam" id="NF009116">
    <property type="entry name" value="PRK12466.1"/>
    <property type="match status" value="1"/>
</dbReference>
<dbReference type="PANTHER" id="PTHR43822:SF9">
    <property type="entry name" value="3-ISOPROPYLMALATE DEHYDRATASE"/>
    <property type="match status" value="1"/>
</dbReference>
<dbReference type="PANTHER" id="PTHR43822">
    <property type="entry name" value="HOMOACONITASE, MITOCHONDRIAL-RELATED"/>
    <property type="match status" value="1"/>
</dbReference>
<dbReference type="Pfam" id="PF00330">
    <property type="entry name" value="Aconitase"/>
    <property type="match status" value="1"/>
</dbReference>
<dbReference type="PRINTS" id="PR00415">
    <property type="entry name" value="ACONITASE"/>
</dbReference>
<dbReference type="SUPFAM" id="SSF53732">
    <property type="entry name" value="Aconitase iron-sulfur domain"/>
    <property type="match status" value="1"/>
</dbReference>
<dbReference type="PROSITE" id="PS00450">
    <property type="entry name" value="ACONITASE_1"/>
    <property type="match status" value="1"/>
</dbReference>
<dbReference type="PROSITE" id="PS01244">
    <property type="entry name" value="ACONITASE_2"/>
    <property type="match status" value="1"/>
</dbReference>
<comment type="function">
    <text evidence="1">Catalyzes the isomerization between 2-isopropylmalate and 3-isopropylmalate, via the formation of 2-isopropylmaleate.</text>
</comment>
<comment type="catalytic activity">
    <reaction evidence="1">
        <text>(2R,3S)-3-isopropylmalate = (2S)-2-isopropylmalate</text>
        <dbReference type="Rhea" id="RHEA:32287"/>
        <dbReference type="ChEBI" id="CHEBI:1178"/>
        <dbReference type="ChEBI" id="CHEBI:35121"/>
        <dbReference type="EC" id="4.2.1.33"/>
    </reaction>
</comment>
<comment type="cofactor">
    <cofactor evidence="1">
        <name>[4Fe-4S] cluster</name>
        <dbReference type="ChEBI" id="CHEBI:49883"/>
    </cofactor>
    <text evidence="1">Binds 1 [4Fe-4S] cluster per subunit.</text>
</comment>
<comment type="pathway">
    <text evidence="1">Amino-acid biosynthesis; L-leucine biosynthesis; L-leucine from 3-methyl-2-oxobutanoate: step 2/4.</text>
</comment>
<comment type="subunit">
    <text evidence="1">Heterodimer of LeuC and LeuD.</text>
</comment>
<comment type="similarity">
    <text evidence="1">Belongs to the aconitase/IPM isomerase family. LeuC type 1 subfamily.</text>
</comment>